<sequence length="328" mass="35558">MKRHLISAADLTRDDAVLILDTAEEMARVADRPIKKLPTLRGRTVVNLFFEDSTRTRISFEAAAKRLSADVINFSAKGSSVSKGESLKDTALTLEAMGADAVVIRHGASGAPYRLATSGWIDGAVVNAGDGTHEHPTQALLDAFTMRRRLVGADTGLGRDLDGRRITIVGDILHSRVARSNVHLLTTLGAHVTLVAPPTLVPVGVEKWPCDVSYSLDDVLAKSDAVMMLRVQRERMNAAYFPTEREYSRRYGLDGERMAKMPEHAIVMHPGPMVRGMEITAEVADSDRCTVVEQVANGVSIRMAVLYLLLGGSDTALSAAPARTEENK</sequence>
<feature type="chain" id="PRO_1000088804" description="Aspartate carbamoyltransferase catalytic subunit">
    <location>
        <begin position="1"/>
        <end position="328"/>
    </location>
</feature>
<feature type="binding site" evidence="1">
    <location>
        <position position="55"/>
    </location>
    <ligand>
        <name>carbamoyl phosphate</name>
        <dbReference type="ChEBI" id="CHEBI:58228"/>
    </ligand>
</feature>
<feature type="binding site" evidence="1">
    <location>
        <position position="56"/>
    </location>
    <ligand>
        <name>carbamoyl phosphate</name>
        <dbReference type="ChEBI" id="CHEBI:58228"/>
    </ligand>
</feature>
<feature type="binding site" evidence="1">
    <location>
        <position position="83"/>
    </location>
    <ligand>
        <name>L-aspartate</name>
        <dbReference type="ChEBI" id="CHEBI:29991"/>
    </ligand>
</feature>
<feature type="binding site" evidence="1">
    <location>
        <position position="105"/>
    </location>
    <ligand>
        <name>carbamoyl phosphate</name>
        <dbReference type="ChEBI" id="CHEBI:58228"/>
    </ligand>
</feature>
<feature type="binding site" evidence="1">
    <location>
        <position position="135"/>
    </location>
    <ligand>
        <name>carbamoyl phosphate</name>
        <dbReference type="ChEBI" id="CHEBI:58228"/>
    </ligand>
</feature>
<feature type="binding site" evidence="1">
    <location>
        <position position="138"/>
    </location>
    <ligand>
        <name>carbamoyl phosphate</name>
        <dbReference type="ChEBI" id="CHEBI:58228"/>
    </ligand>
</feature>
<feature type="binding site" evidence="1">
    <location>
        <position position="176"/>
    </location>
    <ligand>
        <name>L-aspartate</name>
        <dbReference type="ChEBI" id="CHEBI:29991"/>
    </ligand>
</feature>
<feature type="binding site" evidence="1">
    <location>
        <position position="230"/>
    </location>
    <ligand>
        <name>L-aspartate</name>
        <dbReference type="ChEBI" id="CHEBI:29991"/>
    </ligand>
</feature>
<feature type="binding site" evidence="1">
    <location>
        <position position="271"/>
    </location>
    <ligand>
        <name>carbamoyl phosphate</name>
        <dbReference type="ChEBI" id="CHEBI:58228"/>
    </ligand>
</feature>
<feature type="binding site" evidence="1">
    <location>
        <position position="272"/>
    </location>
    <ligand>
        <name>carbamoyl phosphate</name>
        <dbReference type="ChEBI" id="CHEBI:58228"/>
    </ligand>
</feature>
<organism>
    <name type="scientific">Streptomyces griseus subsp. griseus (strain JCM 4626 / CBS 651.72 / NBRC 13350 / KCC S-0626 / ISP 5235)</name>
    <dbReference type="NCBI Taxonomy" id="455632"/>
    <lineage>
        <taxon>Bacteria</taxon>
        <taxon>Bacillati</taxon>
        <taxon>Actinomycetota</taxon>
        <taxon>Actinomycetes</taxon>
        <taxon>Kitasatosporales</taxon>
        <taxon>Streptomycetaceae</taxon>
        <taxon>Streptomyces</taxon>
    </lineage>
</organism>
<comment type="function">
    <text evidence="1">Catalyzes the condensation of carbamoyl phosphate and aspartate to form carbamoyl aspartate and inorganic phosphate, the committed step in the de novo pyrimidine nucleotide biosynthesis pathway.</text>
</comment>
<comment type="catalytic activity">
    <reaction evidence="1">
        <text>carbamoyl phosphate + L-aspartate = N-carbamoyl-L-aspartate + phosphate + H(+)</text>
        <dbReference type="Rhea" id="RHEA:20013"/>
        <dbReference type="ChEBI" id="CHEBI:15378"/>
        <dbReference type="ChEBI" id="CHEBI:29991"/>
        <dbReference type="ChEBI" id="CHEBI:32814"/>
        <dbReference type="ChEBI" id="CHEBI:43474"/>
        <dbReference type="ChEBI" id="CHEBI:58228"/>
        <dbReference type="EC" id="2.1.3.2"/>
    </reaction>
</comment>
<comment type="pathway">
    <text evidence="1">Pyrimidine metabolism; UMP biosynthesis via de novo pathway; (S)-dihydroorotate from bicarbonate: step 2/3.</text>
</comment>
<comment type="subunit">
    <text evidence="1">Heterododecamer (2C3:3R2) of six catalytic PyrB chains organized as two trimers (C3), and six regulatory PyrI chains organized as three dimers (R2).</text>
</comment>
<comment type="similarity">
    <text evidence="1">Belongs to the aspartate/ornithine carbamoyltransferase superfamily. ATCase family.</text>
</comment>
<protein>
    <recommendedName>
        <fullName evidence="1">Aspartate carbamoyltransferase catalytic subunit</fullName>
        <ecNumber evidence="1">2.1.3.2</ecNumber>
    </recommendedName>
    <alternativeName>
        <fullName evidence="1">Aspartate transcarbamylase</fullName>
        <shortName evidence="1">ATCase</shortName>
    </alternativeName>
</protein>
<accession>B1W459</accession>
<dbReference type="EC" id="2.1.3.2" evidence="1"/>
<dbReference type="EMBL" id="AP009493">
    <property type="protein sequence ID" value="BAG22876.1"/>
    <property type="molecule type" value="Genomic_DNA"/>
</dbReference>
<dbReference type="RefSeq" id="WP_003970360.1">
    <property type="nucleotide sequence ID" value="NC_010572.1"/>
</dbReference>
<dbReference type="SMR" id="B1W459"/>
<dbReference type="KEGG" id="sgr:SGR_6047"/>
<dbReference type="eggNOG" id="COG0540">
    <property type="taxonomic scope" value="Bacteria"/>
</dbReference>
<dbReference type="HOGENOM" id="CLU_043846_2_0_11"/>
<dbReference type="UniPathway" id="UPA00070">
    <property type="reaction ID" value="UER00116"/>
</dbReference>
<dbReference type="Proteomes" id="UP000001685">
    <property type="component" value="Chromosome"/>
</dbReference>
<dbReference type="GO" id="GO:0005829">
    <property type="term" value="C:cytosol"/>
    <property type="evidence" value="ECO:0007669"/>
    <property type="project" value="TreeGrafter"/>
</dbReference>
<dbReference type="GO" id="GO:0016597">
    <property type="term" value="F:amino acid binding"/>
    <property type="evidence" value="ECO:0007669"/>
    <property type="project" value="InterPro"/>
</dbReference>
<dbReference type="GO" id="GO:0004070">
    <property type="term" value="F:aspartate carbamoyltransferase activity"/>
    <property type="evidence" value="ECO:0007669"/>
    <property type="project" value="UniProtKB-UniRule"/>
</dbReference>
<dbReference type="GO" id="GO:0006207">
    <property type="term" value="P:'de novo' pyrimidine nucleobase biosynthetic process"/>
    <property type="evidence" value="ECO:0007669"/>
    <property type="project" value="InterPro"/>
</dbReference>
<dbReference type="GO" id="GO:0044205">
    <property type="term" value="P:'de novo' UMP biosynthetic process"/>
    <property type="evidence" value="ECO:0007669"/>
    <property type="project" value="UniProtKB-UniRule"/>
</dbReference>
<dbReference type="GO" id="GO:0006520">
    <property type="term" value="P:amino acid metabolic process"/>
    <property type="evidence" value="ECO:0007669"/>
    <property type="project" value="InterPro"/>
</dbReference>
<dbReference type="FunFam" id="3.40.50.1370:FF:000007">
    <property type="entry name" value="Aspartate carbamoyltransferase"/>
    <property type="match status" value="1"/>
</dbReference>
<dbReference type="FunFam" id="3.40.50.1370:FF:000012">
    <property type="entry name" value="Aspartate carbamoyltransferase"/>
    <property type="match status" value="1"/>
</dbReference>
<dbReference type="Gene3D" id="3.40.50.1370">
    <property type="entry name" value="Aspartate/ornithine carbamoyltransferase"/>
    <property type="match status" value="2"/>
</dbReference>
<dbReference type="HAMAP" id="MF_00001">
    <property type="entry name" value="Asp_carb_tr"/>
    <property type="match status" value="1"/>
</dbReference>
<dbReference type="InterPro" id="IPR006132">
    <property type="entry name" value="Asp/Orn_carbamoyltranf_P-bd"/>
</dbReference>
<dbReference type="InterPro" id="IPR006130">
    <property type="entry name" value="Asp/Orn_carbamoylTrfase"/>
</dbReference>
<dbReference type="InterPro" id="IPR036901">
    <property type="entry name" value="Asp/Orn_carbamoylTrfase_sf"/>
</dbReference>
<dbReference type="InterPro" id="IPR002082">
    <property type="entry name" value="Asp_carbamoyltransf"/>
</dbReference>
<dbReference type="InterPro" id="IPR006131">
    <property type="entry name" value="Asp_carbamoyltransf_Asp/Orn-bd"/>
</dbReference>
<dbReference type="NCBIfam" id="TIGR00670">
    <property type="entry name" value="asp_carb_tr"/>
    <property type="match status" value="1"/>
</dbReference>
<dbReference type="NCBIfam" id="NF002032">
    <property type="entry name" value="PRK00856.1"/>
    <property type="match status" value="1"/>
</dbReference>
<dbReference type="PANTHER" id="PTHR45753:SF6">
    <property type="entry name" value="ASPARTATE CARBAMOYLTRANSFERASE"/>
    <property type="match status" value="1"/>
</dbReference>
<dbReference type="PANTHER" id="PTHR45753">
    <property type="entry name" value="ORNITHINE CARBAMOYLTRANSFERASE, MITOCHONDRIAL"/>
    <property type="match status" value="1"/>
</dbReference>
<dbReference type="Pfam" id="PF00185">
    <property type="entry name" value="OTCace"/>
    <property type="match status" value="1"/>
</dbReference>
<dbReference type="Pfam" id="PF02729">
    <property type="entry name" value="OTCace_N"/>
    <property type="match status" value="1"/>
</dbReference>
<dbReference type="PRINTS" id="PR00100">
    <property type="entry name" value="AOTCASE"/>
</dbReference>
<dbReference type="PRINTS" id="PR00101">
    <property type="entry name" value="ATCASE"/>
</dbReference>
<dbReference type="SUPFAM" id="SSF53671">
    <property type="entry name" value="Aspartate/ornithine carbamoyltransferase"/>
    <property type="match status" value="1"/>
</dbReference>
<dbReference type="PROSITE" id="PS00097">
    <property type="entry name" value="CARBAMOYLTRANSFERASE"/>
    <property type="match status" value="1"/>
</dbReference>
<gene>
    <name evidence="1" type="primary">pyrB</name>
    <name type="ordered locus">SGR_6047</name>
</gene>
<reference key="1">
    <citation type="journal article" date="2008" name="J. Bacteriol.">
        <title>Genome sequence of the streptomycin-producing microorganism Streptomyces griseus IFO 13350.</title>
        <authorList>
            <person name="Ohnishi Y."/>
            <person name="Ishikawa J."/>
            <person name="Hara H."/>
            <person name="Suzuki H."/>
            <person name="Ikenoya M."/>
            <person name="Ikeda H."/>
            <person name="Yamashita A."/>
            <person name="Hattori M."/>
            <person name="Horinouchi S."/>
        </authorList>
    </citation>
    <scope>NUCLEOTIDE SEQUENCE [LARGE SCALE GENOMIC DNA]</scope>
    <source>
        <strain>JCM 4626 / CBS 651.72 / NBRC 13350 / KCC S-0626 / ISP 5235</strain>
    </source>
</reference>
<name>PYRB_STRGG</name>
<evidence type="ECO:0000255" key="1">
    <source>
        <dbReference type="HAMAP-Rule" id="MF_00001"/>
    </source>
</evidence>
<proteinExistence type="inferred from homology"/>
<keyword id="KW-0665">Pyrimidine biosynthesis</keyword>
<keyword id="KW-0808">Transferase</keyword>